<name>PRMA_BACFN</name>
<feature type="chain" id="PRO_1000045985" description="Ribosomal protein L11 methyltransferase">
    <location>
        <begin position="1"/>
        <end position="280"/>
    </location>
</feature>
<feature type="binding site" evidence="1">
    <location>
        <position position="131"/>
    </location>
    <ligand>
        <name>S-adenosyl-L-methionine</name>
        <dbReference type="ChEBI" id="CHEBI:59789"/>
    </ligand>
</feature>
<feature type="binding site" evidence="1">
    <location>
        <position position="152"/>
    </location>
    <ligand>
        <name>S-adenosyl-L-methionine</name>
        <dbReference type="ChEBI" id="CHEBI:59789"/>
    </ligand>
</feature>
<feature type="binding site" evidence="1">
    <location>
        <position position="174"/>
    </location>
    <ligand>
        <name>S-adenosyl-L-methionine</name>
        <dbReference type="ChEBI" id="CHEBI:59789"/>
    </ligand>
</feature>
<feature type="binding site" evidence="1">
    <location>
        <position position="217"/>
    </location>
    <ligand>
        <name>S-adenosyl-L-methionine</name>
        <dbReference type="ChEBI" id="CHEBI:59789"/>
    </ligand>
</feature>
<sequence length="280" mass="31389">MKYFEFTFDTHPCTETVNDVLAAVLGEAGFESFVEREGGLTAYIQQSLYNEETLKTELANFPVPDTEISYTFAEAEDKDWNEEWEKNFFQPIVIGDRCVIHSTFHQDVPKAEYDILINPQMAFGTGHHETTSLIIGELLDSELTGKSLLDMGCGTSILAILARMRGAKPCTAIDIDEWCVRNSIENIELNGVTDIAVSQGDASALQGKGPFDVVIANINRNILLNDMKQYVACMHPGSELFMSGFYIDDIPAIRREAEKHGLTFVHHQEKNRWAAVKFVL</sequence>
<organism>
    <name type="scientific">Bacteroides fragilis (strain ATCC 25285 / DSM 2151 / CCUG 4856 / JCM 11019 / LMG 10263 / NCTC 9343 / Onslow / VPI 2553 / EN-2)</name>
    <dbReference type="NCBI Taxonomy" id="272559"/>
    <lineage>
        <taxon>Bacteria</taxon>
        <taxon>Pseudomonadati</taxon>
        <taxon>Bacteroidota</taxon>
        <taxon>Bacteroidia</taxon>
        <taxon>Bacteroidales</taxon>
        <taxon>Bacteroidaceae</taxon>
        <taxon>Bacteroides</taxon>
    </lineage>
</organism>
<comment type="function">
    <text evidence="1">Methylates ribosomal protein L11.</text>
</comment>
<comment type="catalytic activity">
    <reaction evidence="1">
        <text>L-lysyl-[protein] + 3 S-adenosyl-L-methionine = N(6),N(6),N(6)-trimethyl-L-lysyl-[protein] + 3 S-adenosyl-L-homocysteine + 3 H(+)</text>
        <dbReference type="Rhea" id="RHEA:54192"/>
        <dbReference type="Rhea" id="RHEA-COMP:9752"/>
        <dbReference type="Rhea" id="RHEA-COMP:13826"/>
        <dbReference type="ChEBI" id="CHEBI:15378"/>
        <dbReference type="ChEBI" id="CHEBI:29969"/>
        <dbReference type="ChEBI" id="CHEBI:57856"/>
        <dbReference type="ChEBI" id="CHEBI:59789"/>
        <dbReference type="ChEBI" id="CHEBI:61961"/>
    </reaction>
</comment>
<comment type="subcellular location">
    <subcellularLocation>
        <location evidence="1">Cytoplasm</location>
    </subcellularLocation>
</comment>
<comment type="similarity">
    <text evidence="1">Belongs to the methyltransferase superfamily. PrmA family.</text>
</comment>
<gene>
    <name evidence="1" type="primary">prmA</name>
    <name type="ordered locus">BF1638</name>
</gene>
<reference key="1">
    <citation type="journal article" date="2005" name="Science">
        <title>Extensive DNA inversions in the B. fragilis genome control variable gene expression.</title>
        <authorList>
            <person name="Cerdeno-Tarraga A.-M."/>
            <person name="Patrick S."/>
            <person name="Crossman L.C."/>
            <person name="Blakely G."/>
            <person name="Abratt V."/>
            <person name="Lennard N."/>
            <person name="Poxton I."/>
            <person name="Duerden B."/>
            <person name="Harris B."/>
            <person name="Quail M.A."/>
            <person name="Barron A."/>
            <person name="Clark L."/>
            <person name="Corton C."/>
            <person name="Doggett J."/>
            <person name="Holden M.T.G."/>
            <person name="Larke N."/>
            <person name="Line A."/>
            <person name="Lord A."/>
            <person name="Norbertczak H."/>
            <person name="Ormond D."/>
            <person name="Price C."/>
            <person name="Rabbinowitsch E."/>
            <person name="Woodward J."/>
            <person name="Barrell B.G."/>
            <person name="Parkhill J."/>
        </authorList>
    </citation>
    <scope>NUCLEOTIDE SEQUENCE [LARGE SCALE GENOMIC DNA]</scope>
    <source>
        <strain>ATCC 25285 / DSM 2151 / CCUG 4856 / JCM 11019 / LMG 10263 / NCTC 9343 / Onslow / VPI 2553 / EN-2</strain>
    </source>
</reference>
<dbReference type="EC" id="2.1.1.-" evidence="1"/>
<dbReference type="EMBL" id="CR626927">
    <property type="protein sequence ID" value="CAH07338.1"/>
    <property type="molecule type" value="Genomic_DNA"/>
</dbReference>
<dbReference type="RefSeq" id="WP_005795115.1">
    <property type="nucleotide sequence ID" value="NZ_UFTH01000001.1"/>
</dbReference>
<dbReference type="SMR" id="Q5LEW2"/>
<dbReference type="PaxDb" id="272559-BF9343_1557"/>
<dbReference type="GeneID" id="60367034"/>
<dbReference type="KEGG" id="bfs:BF9343_1557"/>
<dbReference type="eggNOG" id="COG2264">
    <property type="taxonomic scope" value="Bacteria"/>
</dbReference>
<dbReference type="HOGENOM" id="CLU_049382_0_0_10"/>
<dbReference type="Proteomes" id="UP000006731">
    <property type="component" value="Chromosome"/>
</dbReference>
<dbReference type="GO" id="GO:0005737">
    <property type="term" value="C:cytoplasm"/>
    <property type="evidence" value="ECO:0007669"/>
    <property type="project" value="UniProtKB-SubCell"/>
</dbReference>
<dbReference type="GO" id="GO:0016279">
    <property type="term" value="F:protein-lysine N-methyltransferase activity"/>
    <property type="evidence" value="ECO:0007669"/>
    <property type="project" value="RHEA"/>
</dbReference>
<dbReference type="GO" id="GO:0032259">
    <property type="term" value="P:methylation"/>
    <property type="evidence" value="ECO:0007669"/>
    <property type="project" value="UniProtKB-KW"/>
</dbReference>
<dbReference type="CDD" id="cd02440">
    <property type="entry name" value="AdoMet_MTases"/>
    <property type="match status" value="1"/>
</dbReference>
<dbReference type="Gene3D" id="3.40.50.150">
    <property type="entry name" value="Vaccinia Virus protein VP39"/>
    <property type="match status" value="1"/>
</dbReference>
<dbReference type="HAMAP" id="MF_00735">
    <property type="entry name" value="Methyltr_PrmA"/>
    <property type="match status" value="1"/>
</dbReference>
<dbReference type="InterPro" id="IPR050078">
    <property type="entry name" value="Ribosomal_L11_MeTrfase_PrmA"/>
</dbReference>
<dbReference type="InterPro" id="IPR004498">
    <property type="entry name" value="Ribosomal_PrmA_MeTrfase"/>
</dbReference>
<dbReference type="InterPro" id="IPR029063">
    <property type="entry name" value="SAM-dependent_MTases_sf"/>
</dbReference>
<dbReference type="NCBIfam" id="NF001785">
    <property type="entry name" value="PRK00517.2-2"/>
    <property type="match status" value="1"/>
</dbReference>
<dbReference type="PANTHER" id="PTHR43648">
    <property type="entry name" value="ELECTRON TRANSFER FLAVOPROTEIN BETA SUBUNIT LYSINE METHYLTRANSFERASE"/>
    <property type="match status" value="1"/>
</dbReference>
<dbReference type="PANTHER" id="PTHR43648:SF1">
    <property type="entry name" value="ELECTRON TRANSFER FLAVOPROTEIN BETA SUBUNIT LYSINE METHYLTRANSFERASE"/>
    <property type="match status" value="1"/>
</dbReference>
<dbReference type="Pfam" id="PF06325">
    <property type="entry name" value="PrmA"/>
    <property type="match status" value="1"/>
</dbReference>
<dbReference type="PIRSF" id="PIRSF000401">
    <property type="entry name" value="RPL11_MTase"/>
    <property type="match status" value="1"/>
</dbReference>
<dbReference type="SUPFAM" id="SSF53335">
    <property type="entry name" value="S-adenosyl-L-methionine-dependent methyltransferases"/>
    <property type="match status" value="1"/>
</dbReference>
<protein>
    <recommendedName>
        <fullName evidence="1">Ribosomal protein L11 methyltransferase</fullName>
        <shortName evidence="1">L11 Mtase</shortName>
        <ecNumber evidence="1">2.1.1.-</ecNumber>
    </recommendedName>
</protein>
<evidence type="ECO:0000255" key="1">
    <source>
        <dbReference type="HAMAP-Rule" id="MF_00735"/>
    </source>
</evidence>
<keyword id="KW-0963">Cytoplasm</keyword>
<keyword id="KW-0489">Methyltransferase</keyword>
<keyword id="KW-0949">S-adenosyl-L-methionine</keyword>
<keyword id="KW-0808">Transferase</keyword>
<proteinExistence type="inferred from homology"/>
<accession>Q5LEW2</accession>